<feature type="chain" id="PRO_0000387369" description="tRNA1(Val) (adenine(37)-N6)-methyltransferase">
    <location>
        <begin position="1"/>
        <end position="245"/>
    </location>
</feature>
<organism>
    <name type="scientific">Escherichia coli O17:K52:H18 (strain UMN026 / ExPEC)</name>
    <dbReference type="NCBI Taxonomy" id="585056"/>
    <lineage>
        <taxon>Bacteria</taxon>
        <taxon>Pseudomonadati</taxon>
        <taxon>Pseudomonadota</taxon>
        <taxon>Gammaproteobacteria</taxon>
        <taxon>Enterobacterales</taxon>
        <taxon>Enterobacteriaceae</taxon>
        <taxon>Escherichia</taxon>
    </lineage>
</organism>
<proteinExistence type="inferred from homology"/>
<reference key="1">
    <citation type="journal article" date="2009" name="PLoS Genet.">
        <title>Organised genome dynamics in the Escherichia coli species results in highly diverse adaptive paths.</title>
        <authorList>
            <person name="Touchon M."/>
            <person name="Hoede C."/>
            <person name="Tenaillon O."/>
            <person name="Barbe V."/>
            <person name="Baeriswyl S."/>
            <person name="Bidet P."/>
            <person name="Bingen E."/>
            <person name="Bonacorsi S."/>
            <person name="Bouchier C."/>
            <person name="Bouvet O."/>
            <person name="Calteau A."/>
            <person name="Chiapello H."/>
            <person name="Clermont O."/>
            <person name="Cruveiller S."/>
            <person name="Danchin A."/>
            <person name="Diard M."/>
            <person name="Dossat C."/>
            <person name="Karoui M.E."/>
            <person name="Frapy E."/>
            <person name="Garry L."/>
            <person name="Ghigo J.M."/>
            <person name="Gilles A.M."/>
            <person name="Johnson J."/>
            <person name="Le Bouguenec C."/>
            <person name="Lescat M."/>
            <person name="Mangenot S."/>
            <person name="Martinez-Jehanne V."/>
            <person name="Matic I."/>
            <person name="Nassif X."/>
            <person name="Oztas S."/>
            <person name="Petit M.A."/>
            <person name="Pichon C."/>
            <person name="Rouy Z."/>
            <person name="Ruf C.S."/>
            <person name="Schneider D."/>
            <person name="Tourret J."/>
            <person name="Vacherie B."/>
            <person name="Vallenet D."/>
            <person name="Medigue C."/>
            <person name="Rocha E.P.C."/>
            <person name="Denamur E."/>
        </authorList>
    </citation>
    <scope>NUCLEOTIDE SEQUENCE [LARGE SCALE GENOMIC DNA]</scope>
    <source>
        <strain>UMN026 / ExPEC</strain>
    </source>
</reference>
<comment type="function">
    <text evidence="1">Specifically methylates the adenine in position 37 of tRNA(1)(Val) (anticodon cmo5UAC).</text>
</comment>
<comment type="catalytic activity">
    <reaction evidence="1">
        <text>adenosine(37) in tRNA1(Val) + S-adenosyl-L-methionine = N(6)-methyladenosine(37) in tRNA1(Val) + S-adenosyl-L-homocysteine + H(+)</text>
        <dbReference type="Rhea" id="RHEA:43160"/>
        <dbReference type="Rhea" id="RHEA-COMP:10369"/>
        <dbReference type="Rhea" id="RHEA-COMP:10370"/>
        <dbReference type="ChEBI" id="CHEBI:15378"/>
        <dbReference type="ChEBI" id="CHEBI:57856"/>
        <dbReference type="ChEBI" id="CHEBI:59789"/>
        <dbReference type="ChEBI" id="CHEBI:74411"/>
        <dbReference type="ChEBI" id="CHEBI:74449"/>
        <dbReference type="EC" id="2.1.1.223"/>
    </reaction>
</comment>
<comment type="subcellular location">
    <subcellularLocation>
        <location evidence="1">Cytoplasm</location>
    </subcellularLocation>
</comment>
<comment type="similarity">
    <text evidence="1">Belongs to the methyltransferase superfamily. tRNA (adenine-N(6)-)-methyltransferase family.</text>
</comment>
<dbReference type="EC" id="2.1.1.223" evidence="1"/>
<dbReference type="EMBL" id="CU928163">
    <property type="protein sequence ID" value="CAR14073.1"/>
    <property type="molecule type" value="Genomic_DNA"/>
</dbReference>
<dbReference type="RefSeq" id="YP_002413597.1">
    <property type="nucleotide sequence ID" value="NC_011751.1"/>
</dbReference>
<dbReference type="SMR" id="B7N6G4"/>
<dbReference type="STRING" id="585056.ECUMN_2898"/>
<dbReference type="KEGG" id="eum:ECUMN_2898"/>
<dbReference type="PATRIC" id="fig|585056.7.peg.3084"/>
<dbReference type="HOGENOM" id="CLU_061983_0_0_6"/>
<dbReference type="Proteomes" id="UP000007097">
    <property type="component" value="Chromosome"/>
</dbReference>
<dbReference type="GO" id="GO:0005737">
    <property type="term" value="C:cytoplasm"/>
    <property type="evidence" value="ECO:0007669"/>
    <property type="project" value="UniProtKB-SubCell"/>
</dbReference>
<dbReference type="GO" id="GO:0003676">
    <property type="term" value="F:nucleic acid binding"/>
    <property type="evidence" value="ECO:0007669"/>
    <property type="project" value="InterPro"/>
</dbReference>
<dbReference type="GO" id="GO:0016430">
    <property type="term" value="F:tRNA (adenine-N6)-methyltransferase activity"/>
    <property type="evidence" value="ECO:0007669"/>
    <property type="project" value="UniProtKB-UniRule"/>
</dbReference>
<dbReference type="GO" id="GO:0032259">
    <property type="term" value="P:methylation"/>
    <property type="evidence" value="ECO:0007669"/>
    <property type="project" value="UniProtKB-KW"/>
</dbReference>
<dbReference type="GO" id="GO:0008033">
    <property type="term" value="P:tRNA processing"/>
    <property type="evidence" value="ECO:0007669"/>
    <property type="project" value="UniProtKB-UniRule"/>
</dbReference>
<dbReference type="CDD" id="cd02440">
    <property type="entry name" value="AdoMet_MTases"/>
    <property type="match status" value="1"/>
</dbReference>
<dbReference type="FunFam" id="3.40.50.150:FF:000087">
    <property type="entry name" value="tRNA1(Val) (adenine(37)-N6)-methyltransferase"/>
    <property type="match status" value="1"/>
</dbReference>
<dbReference type="Gene3D" id="3.40.50.150">
    <property type="entry name" value="Vaccinia Virus protein VP39"/>
    <property type="match status" value="1"/>
</dbReference>
<dbReference type="HAMAP" id="MF_01872">
    <property type="entry name" value="tRNA_methyltr_YfiC"/>
    <property type="match status" value="1"/>
</dbReference>
<dbReference type="InterPro" id="IPR002052">
    <property type="entry name" value="DNA_methylase_N6_adenine_CS"/>
</dbReference>
<dbReference type="InterPro" id="IPR029063">
    <property type="entry name" value="SAM-dependent_MTases_sf"/>
</dbReference>
<dbReference type="InterPro" id="IPR007848">
    <property type="entry name" value="Small_mtfrase_dom"/>
</dbReference>
<dbReference type="InterPro" id="IPR050210">
    <property type="entry name" value="tRNA_Adenine-N(6)_MTase"/>
</dbReference>
<dbReference type="InterPro" id="IPR022882">
    <property type="entry name" value="tRNA_adenine-N6_MeTrfase"/>
</dbReference>
<dbReference type="NCBIfam" id="NF047853">
    <property type="entry name" value="tRm6a37MtseTrmN"/>
    <property type="match status" value="1"/>
</dbReference>
<dbReference type="PANTHER" id="PTHR47739">
    <property type="entry name" value="TRNA1(VAL) (ADENINE(37)-N6)-METHYLTRANSFERASE"/>
    <property type="match status" value="1"/>
</dbReference>
<dbReference type="PANTHER" id="PTHR47739:SF1">
    <property type="entry name" value="TRNA1(VAL) (ADENINE(37)-N6)-METHYLTRANSFERASE"/>
    <property type="match status" value="1"/>
</dbReference>
<dbReference type="Pfam" id="PF05175">
    <property type="entry name" value="MTS"/>
    <property type="match status" value="1"/>
</dbReference>
<dbReference type="SUPFAM" id="SSF53335">
    <property type="entry name" value="S-adenosyl-L-methionine-dependent methyltransferases"/>
    <property type="match status" value="1"/>
</dbReference>
<dbReference type="PROSITE" id="PS00092">
    <property type="entry name" value="N6_MTASE"/>
    <property type="match status" value="1"/>
</dbReference>
<sequence>MSQSTSVLRRNGFTFKQFFVAHDRCAMKVGTDGILLGAWAPVAGVKRCLDIGAGSGLLALMLAQRTDDSVMIDAVELESEAAAQAQENINQSPWAERINVHTADIQQWITQQTVRFDLIISNPPYYQQGVECSTPQREQARYTTTLDHPSLLTCAAECITEEGFFCVVLPEQIGNGFTELALSMGWHLRLRTDVAENEARLPHRVLLAFSPQAGECFSDRLVIRGPDQNYSEAYTALTQAFYLFM</sequence>
<keyword id="KW-0963">Cytoplasm</keyword>
<keyword id="KW-0489">Methyltransferase</keyword>
<keyword id="KW-0949">S-adenosyl-L-methionine</keyword>
<keyword id="KW-0808">Transferase</keyword>
<keyword id="KW-0819">tRNA processing</keyword>
<name>TRMN6_ECOLU</name>
<accession>B7N6G4</accession>
<evidence type="ECO:0000255" key="1">
    <source>
        <dbReference type="HAMAP-Rule" id="MF_01872"/>
    </source>
</evidence>
<protein>
    <recommendedName>
        <fullName evidence="1">tRNA1(Val) (adenine(37)-N6)-methyltransferase</fullName>
        <ecNumber evidence="1">2.1.1.223</ecNumber>
    </recommendedName>
    <alternativeName>
        <fullName evidence="1">tRNA m6A37 methyltransferase</fullName>
    </alternativeName>
</protein>
<gene>
    <name evidence="1" type="primary">yfiC</name>
    <name type="ordered locus">ECUMN_2898</name>
</gene>